<sequence length="270" mass="28940">MSLKKSPFFELRSGSVDTLLFIVKTADLDALRAELVKRFEATPEFFADDVVAIDVRRLADHERVPLDDIRGMLNDVRMRVIGVVAQPEQHAWAASAGLPLLEARDRRAPSSKAADEAPVQQAEPAAPAAGQAALFEQAGPTLADAGAPPESPAPAVAAQSATLVVDRPLHSGQQIYAKGDLVVLGPVSYGAEVIAEGNIHIYAPLRGRALAGVHGNHDARIFCTCLEPELISIAGIYRTTENPLPADVLGKSVQIRLEQEKLMIEPLRLT</sequence>
<organism>
    <name type="scientific">Burkholderia mallei (strain NCTC 10247)</name>
    <dbReference type="NCBI Taxonomy" id="320389"/>
    <lineage>
        <taxon>Bacteria</taxon>
        <taxon>Pseudomonadati</taxon>
        <taxon>Pseudomonadota</taxon>
        <taxon>Betaproteobacteria</taxon>
        <taxon>Burkholderiales</taxon>
        <taxon>Burkholderiaceae</taxon>
        <taxon>Burkholderia</taxon>
        <taxon>pseudomallei group</taxon>
    </lineage>
</organism>
<evidence type="ECO:0000255" key="1">
    <source>
        <dbReference type="HAMAP-Rule" id="MF_00267"/>
    </source>
</evidence>
<evidence type="ECO:0000256" key="2">
    <source>
        <dbReference type="SAM" id="MobiDB-lite"/>
    </source>
</evidence>
<feature type="chain" id="PRO_1000047810" description="Probable septum site-determining protein MinC">
    <location>
        <begin position="1"/>
        <end position="270"/>
    </location>
</feature>
<feature type="region of interest" description="Disordered" evidence="2">
    <location>
        <begin position="105"/>
        <end position="129"/>
    </location>
</feature>
<feature type="compositionally biased region" description="Low complexity" evidence="2">
    <location>
        <begin position="116"/>
        <end position="129"/>
    </location>
</feature>
<protein>
    <recommendedName>
        <fullName evidence="1">Probable septum site-determining protein MinC</fullName>
    </recommendedName>
</protein>
<gene>
    <name evidence="1" type="primary">minC</name>
    <name type="ordered locus">BMA10247_1981</name>
</gene>
<comment type="function">
    <text evidence="1">Cell division inhibitor that blocks the formation of polar Z ring septums. Rapidly oscillates between the poles of the cell to destabilize FtsZ filaments that have formed before they mature into polar Z rings. Prevents FtsZ polymerization.</text>
</comment>
<comment type="subunit">
    <text evidence="1">Interacts with MinD and FtsZ.</text>
</comment>
<comment type="similarity">
    <text evidence="1">Belongs to the MinC family.</text>
</comment>
<accession>A3MMM8</accession>
<dbReference type="EMBL" id="CP000548">
    <property type="protein sequence ID" value="ABO04900.1"/>
    <property type="molecule type" value="Genomic_DNA"/>
</dbReference>
<dbReference type="RefSeq" id="WP_004186698.1">
    <property type="nucleotide sequence ID" value="NZ_CP007802.1"/>
</dbReference>
<dbReference type="SMR" id="A3MMM8"/>
<dbReference type="GeneID" id="92979820"/>
<dbReference type="KEGG" id="bmaz:BM44_1236"/>
<dbReference type="KEGG" id="bmn:BMA10247_1981"/>
<dbReference type="PATRIC" id="fig|320389.8.peg.1381"/>
<dbReference type="GO" id="GO:0000902">
    <property type="term" value="P:cell morphogenesis"/>
    <property type="evidence" value="ECO:0007669"/>
    <property type="project" value="InterPro"/>
</dbReference>
<dbReference type="GO" id="GO:0000917">
    <property type="term" value="P:division septum assembly"/>
    <property type="evidence" value="ECO:0007669"/>
    <property type="project" value="UniProtKB-KW"/>
</dbReference>
<dbReference type="GO" id="GO:0051302">
    <property type="term" value="P:regulation of cell division"/>
    <property type="evidence" value="ECO:0007669"/>
    <property type="project" value="InterPro"/>
</dbReference>
<dbReference type="GO" id="GO:1901891">
    <property type="term" value="P:regulation of cell septum assembly"/>
    <property type="evidence" value="ECO:0007669"/>
    <property type="project" value="InterPro"/>
</dbReference>
<dbReference type="Gene3D" id="2.160.20.70">
    <property type="match status" value="1"/>
</dbReference>
<dbReference type="Gene3D" id="3.30.70.260">
    <property type="match status" value="1"/>
</dbReference>
<dbReference type="HAMAP" id="MF_00267">
    <property type="entry name" value="MinC"/>
    <property type="match status" value="1"/>
</dbReference>
<dbReference type="InterPro" id="IPR016098">
    <property type="entry name" value="CAP/MinC_C"/>
</dbReference>
<dbReference type="InterPro" id="IPR013033">
    <property type="entry name" value="MinC"/>
</dbReference>
<dbReference type="InterPro" id="IPR036145">
    <property type="entry name" value="MinC_C_sf"/>
</dbReference>
<dbReference type="InterPro" id="IPR007874">
    <property type="entry name" value="MinC_N"/>
</dbReference>
<dbReference type="InterPro" id="IPR005526">
    <property type="entry name" value="Septum_form_inhib_MinC_C"/>
</dbReference>
<dbReference type="NCBIfam" id="TIGR01222">
    <property type="entry name" value="minC"/>
    <property type="match status" value="1"/>
</dbReference>
<dbReference type="PANTHER" id="PTHR34108">
    <property type="entry name" value="SEPTUM SITE-DETERMINING PROTEIN MINC"/>
    <property type="match status" value="1"/>
</dbReference>
<dbReference type="PANTHER" id="PTHR34108:SF1">
    <property type="entry name" value="SEPTUM SITE-DETERMINING PROTEIN MINC"/>
    <property type="match status" value="1"/>
</dbReference>
<dbReference type="Pfam" id="PF03775">
    <property type="entry name" value="MinC_C"/>
    <property type="match status" value="1"/>
</dbReference>
<dbReference type="Pfam" id="PF05209">
    <property type="entry name" value="MinC_N"/>
    <property type="match status" value="1"/>
</dbReference>
<dbReference type="SUPFAM" id="SSF63848">
    <property type="entry name" value="Cell-division inhibitor MinC, C-terminal domain"/>
    <property type="match status" value="1"/>
</dbReference>
<keyword id="KW-0131">Cell cycle</keyword>
<keyword id="KW-0132">Cell division</keyword>
<keyword id="KW-0717">Septation</keyword>
<reference key="1">
    <citation type="journal article" date="2010" name="Genome Biol. Evol.">
        <title>Continuing evolution of Burkholderia mallei through genome reduction and large-scale rearrangements.</title>
        <authorList>
            <person name="Losada L."/>
            <person name="Ronning C.M."/>
            <person name="DeShazer D."/>
            <person name="Woods D."/>
            <person name="Fedorova N."/>
            <person name="Kim H.S."/>
            <person name="Shabalina S.A."/>
            <person name="Pearson T.R."/>
            <person name="Brinkac L."/>
            <person name="Tan P."/>
            <person name="Nandi T."/>
            <person name="Crabtree J."/>
            <person name="Badger J."/>
            <person name="Beckstrom-Sternberg S."/>
            <person name="Saqib M."/>
            <person name="Schutzer S.E."/>
            <person name="Keim P."/>
            <person name="Nierman W.C."/>
        </authorList>
    </citation>
    <scope>NUCLEOTIDE SEQUENCE [LARGE SCALE GENOMIC DNA]</scope>
    <source>
        <strain>NCTC 10247</strain>
    </source>
</reference>
<proteinExistence type="inferred from homology"/>
<name>MINC_BURM7</name>